<comment type="function">
    <text evidence="1">One of several proteins that assist in the late maturation steps of the functional core of the 30S ribosomal subunit. Associates with free 30S ribosomal subunits (but not with 30S subunits that are part of 70S ribosomes or polysomes). Required for efficient processing of 16S rRNA. May interact with the 5'-terminal helix region of 16S rRNA.</text>
</comment>
<comment type="subunit">
    <text evidence="1">Monomer. Binds 30S ribosomal subunits, but not 50S ribosomal subunits or 70S ribosomes.</text>
</comment>
<comment type="subcellular location">
    <subcellularLocation>
        <location evidence="1">Cytoplasm</location>
    </subcellularLocation>
</comment>
<comment type="similarity">
    <text evidence="1">Belongs to the RbfA family.</text>
</comment>
<name>RBFA_HELAH</name>
<reference key="1">
    <citation type="journal article" date="2006" name="PLoS Genet.">
        <title>Who ate whom? Adaptive Helicobacter genomic changes that accompanied a host jump from early humans to large felines.</title>
        <authorList>
            <person name="Eppinger M."/>
            <person name="Baar C."/>
            <person name="Linz B."/>
            <person name="Raddatz G."/>
            <person name="Lanz C."/>
            <person name="Keller H."/>
            <person name="Morelli G."/>
            <person name="Gressmann H."/>
            <person name="Achtman M."/>
            <person name="Schuster S.C."/>
        </authorList>
    </citation>
    <scope>NUCLEOTIDE SEQUENCE [LARGE SCALE GENOMIC DNA]</scope>
    <source>
        <strain>Sheeba</strain>
    </source>
</reference>
<feature type="chain" id="PRO_1000000120" description="Ribosome-binding factor A">
    <location>
        <begin position="1"/>
        <end position="111"/>
    </location>
</feature>
<keyword id="KW-0963">Cytoplasm</keyword>
<keyword id="KW-0690">Ribosome biogenesis</keyword>
<organism>
    <name type="scientific">Helicobacter acinonychis (strain Sheeba)</name>
    <dbReference type="NCBI Taxonomy" id="382638"/>
    <lineage>
        <taxon>Bacteria</taxon>
        <taxon>Pseudomonadati</taxon>
        <taxon>Campylobacterota</taxon>
        <taxon>Epsilonproteobacteria</taxon>
        <taxon>Campylobacterales</taxon>
        <taxon>Helicobacteraceae</taxon>
        <taxon>Helicobacter</taxon>
    </lineage>
</organism>
<accession>Q17WQ9</accession>
<proteinExistence type="inferred from homology"/>
<protein>
    <recommendedName>
        <fullName evidence="1">Ribosome-binding factor A</fullName>
    </recommendedName>
</protein>
<evidence type="ECO:0000255" key="1">
    <source>
        <dbReference type="HAMAP-Rule" id="MF_00003"/>
    </source>
</evidence>
<gene>
    <name evidence="1" type="primary">rbfA</name>
    <name type="ordered locus">Hac_1158</name>
</gene>
<dbReference type="EMBL" id="AM260522">
    <property type="protein sequence ID" value="CAJ99917.1"/>
    <property type="molecule type" value="Genomic_DNA"/>
</dbReference>
<dbReference type="RefSeq" id="WP_011578024.1">
    <property type="nucleotide sequence ID" value="NC_008229.1"/>
</dbReference>
<dbReference type="SMR" id="Q17WQ9"/>
<dbReference type="STRING" id="382638.Hac_1158"/>
<dbReference type="GeneID" id="31758509"/>
<dbReference type="KEGG" id="hac:Hac_1158"/>
<dbReference type="eggNOG" id="COG0858">
    <property type="taxonomic scope" value="Bacteria"/>
</dbReference>
<dbReference type="HOGENOM" id="CLU_089475_6_5_7"/>
<dbReference type="OrthoDB" id="5339518at2"/>
<dbReference type="BioCyc" id="HACI382638:HAC_RS04985-MONOMER"/>
<dbReference type="Proteomes" id="UP000000775">
    <property type="component" value="Chromosome"/>
</dbReference>
<dbReference type="GO" id="GO:0005737">
    <property type="term" value="C:cytoplasm"/>
    <property type="evidence" value="ECO:0007669"/>
    <property type="project" value="UniProtKB-SubCell"/>
</dbReference>
<dbReference type="GO" id="GO:0030490">
    <property type="term" value="P:maturation of SSU-rRNA"/>
    <property type="evidence" value="ECO:0007669"/>
    <property type="project" value="UniProtKB-UniRule"/>
</dbReference>
<dbReference type="Gene3D" id="3.30.300.20">
    <property type="match status" value="1"/>
</dbReference>
<dbReference type="HAMAP" id="MF_00003">
    <property type="entry name" value="RbfA"/>
    <property type="match status" value="1"/>
</dbReference>
<dbReference type="InterPro" id="IPR015946">
    <property type="entry name" value="KH_dom-like_a/b"/>
</dbReference>
<dbReference type="InterPro" id="IPR000238">
    <property type="entry name" value="RbfA"/>
</dbReference>
<dbReference type="InterPro" id="IPR023799">
    <property type="entry name" value="RbfA_dom_sf"/>
</dbReference>
<dbReference type="InterPro" id="IPR020053">
    <property type="entry name" value="Ribosome-bd_factorA_CS"/>
</dbReference>
<dbReference type="NCBIfam" id="TIGR00082">
    <property type="entry name" value="rbfA"/>
    <property type="match status" value="1"/>
</dbReference>
<dbReference type="Pfam" id="PF02033">
    <property type="entry name" value="RBFA"/>
    <property type="match status" value="1"/>
</dbReference>
<dbReference type="SUPFAM" id="SSF89919">
    <property type="entry name" value="Ribosome-binding factor A, RbfA"/>
    <property type="match status" value="1"/>
</dbReference>
<dbReference type="PROSITE" id="PS01319">
    <property type="entry name" value="RBFA"/>
    <property type="match status" value="1"/>
</dbReference>
<sequence length="111" mass="12581">MNAHKERLESNLLELLQEALSSLNDSELNSLSVTKVECSKGKHHAFVFVLSQDHKILSKLKKAEGLIRQFVLQASGWFKCPKLSFILDNSLEKQLRLDAIFNEIAKGKDDD</sequence>